<proteinExistence type="evidence at transcript level"/>
<reference key="1">
    <citation type="journal article" date="2000" name="Nature">
        <title>Sequence and analysis of chromosome 1 of the plant Arabidopsis thaliana.</title>
        <authorList>
            <person name="Theologis A."/>
            <person name="Ecker J.R."/>
            <person name="Palm C.J."/>
            <person name="Federspiel N.A."/>
            <person name="Kaul S."/>
            <person name="White O."/>
            <person name="Alonso J."/>
            <person name="Altafi H."/>
            <person name="Araujo R."/>
            <person name="Bowman C.L."/>
            <person name="Brooks S.Y."/>
            <person name="Buehler E."/>
            <person name="Chan A."/>
            <person name="Chao Q."/>
            <person name="Chen H."/>
            <person name="Cheuk R.F."/>
            <person name="Chin C.W."/>
            <person name="Chung M.K."/>
            <person name="Conn L."/>
            <person name="Conway A.B."/>
            <person name="Conway A.R."/>
            <person name="Creasy T.H."/>
            <person name="Dewar K."/>
            <person name="Dunn P."/>
            <person name="Etgu P."/>
            <person name="Feldblyum T.V."/>
            <person name="Feng J.-D."/>
            <person name="Fong B."/>
            <person name="Fujii C.Y."/>
            <person name="Gill J.E."/>
            <person name="Goldsmith A.D."/>
            <person name="Haas B."/>
            <person name="Hansen N.F."/>
            <person name="Hughes B."/>
            <person name="Huizar L."/>
            <person name="Hunter J.L."/>
            <person name="Jenkins J."/>
            <person name="Johnson-Hopson C."/>
            <person name="Khan S."/>
            <person name="Khaykin E."/>
            <person name="Kim C.J."/>
            <person name="Koo H.L."/>
            <person name="Kremenetskaia I."/>
            <person name="Kurtz D.B."/>
            <person name="Kwan A."/>
            <person name="Lam B."/>
            <person name="Langin-Hooper S."/>
            <person name="Lee A."/>
            <person name="Lee J.M."/>
            <person name="Lenz C.A."/>
            <person name="Li J.H."/>
            <person name="Li Y.-P."/>
            <person name="Lin X."/>
            <person name="Liu S.X."/>
            <person name="Liu Z.A."/>
            <person name="Luros J.S."/>
            <person name="Maiti R."/>
            <person name="Marziali A."/>
            <person name="Militscher J."/>
            <person name="Miranda M."/>
            <person name="Nguyen M."/>
            <person name="Nierman W.C."/>
            <person name="Osborne B.I."/>
            <person name="Pai G."/>
            <person name="Peterson J."/>
            <person name="Pham P.K."/>
            <person name="Rizzo M."/>
            <person name="Rooney T."/>
            <person name="Rowley D."/>
            <person name="Sakano H."/>
            <person name="Salzberg S.L."/>
            <person name="Schwartz J.R."/>
            <person name="Shinn P."/>
            <person name="Southwick A.M."/>
            <person name="Sun H."/>
            <person name="Tallon L.J."/>
            <person name="Tambunga G."/>
            <person name="Toriumi M.J."/>
            <person name="Town C.D."/>
            <person name="Utterback T."/>
            <person name="Van Aken S."/>
            <person name="Vaysberg M."/>
            <person name="Vysotskaia V.S."/>
            <person name="Walker M."/>
            <person name="Wu D."/>
            <person name="Yu G."/>
            <person name="Fraser C.M."/>
            <person name="Venter J.C."/>
            <person name="Davis R.W."/>
        </authorList>
    </citation>
    <scope>NUCLEOTIDE SEQUENCE [LARGE SCALE GENOMIC DNA]</scope>
    <source>
        <strain>cv. Columbia</strain>
    </source>
</reference>
<reference key="2">
    <citation type="journal article" date="2017" name="Plant J.">
        <title>Araport11: a complete reannotation of the Arabidopsis thaliana reference genome.</title>
        <authorList>
            <person name="Cheng C.Y."/>
            <person name="Krishnakumar V."/>
            <person name="Chan A.P."/>
            <person name="Thibaud-Nissen F."/>
            <person name="Schobel S."/>
            <person name="Town C.D."/>
        </authorList>
    </citation>
    <scope>GENOME REANNOTATION</scope>
    <source>
        <strain>cv. Columbia</strain>
    </source>
</reference>
<reference key="3">
    <citation type="journal article" date="2003" name="Science">
        <title>Empirical analysis of transcriptional activity in the Arabidopsis genome.</title>
        <authorList>
            <person name="Yamada K."/>
            <person name="Lim J."/>
            <person name="Dale J.M."/>
            <person name="Chen H."/>
            <person name="Shinn P."/>
            <person name="Palm C.J."/>
            <person name="Southwick A.M."/>
            <person name="Wu H.C."/>
            <person name="Kim C.J."/>
            <person name="Nguyen M."/>
            <person name="Pham P.K."/>
            <person name="Cheuk R.F."/>
            <person name="Karlin-Newmann G."/>
            <person name="Liu S.X."/>
            <person name="Lam B."/>
            <person name="Sakano H."/>
            <person name="Wu T."/>
            <person name="Yu G."/>
            <person name="Miranda M."/>
            <person name="Quach H.L."/>
            <person name="Tripp M."/>
            <person name="Chang C.H."/>
            <person name="Lee J.M."/>
            <person name="Toriumi M.J."/>
            <person name="Chan M.M."/>
            <person name="Tang C.C."/>
            <person name="Onodera C.S."/>
            <person name="Deng J.M."/>
            <person name="Akiyama K."/>
            <person name="Ansari Y."/>
            <person name="Arakawa T."/>
            <person name="Banh J."/>
            <person name="Banno F."/>
            <person name="Bowser L."/>
            <person name="Brooks S.Y."/>
            <person name="Carninci P."/>
            <person name="Chao Q."/>
            <person name="Choy N."/>
            <person name="Enju A."/>
            <person name="Goldsmith A.D."/>
            <person name="Gurjal M."/>
            <person name="Hansen N.F."/>
            <person name="Hayashizaki Y."/>
            <person name="Johnson-Hopson C."/>
            <person name="Hsuan V.W."/>
            <person name="Iida K."/>
            <person name="Karnes M."/>
            <person name="Khan S."/>
            <person name="Koesema E."/>
            <person name="Ishida J."/>
            <person name="Jiang P.X."/>
            <person name="Jones T."/>
            <person name="Kawai J."/>
            <person name="Kamiya A."/>
            <person name="Meyers C."/>
            <person name="Nakajima M."/>
            <person name="Narusaka M."/>
            <person name="Seki M."/>
            <person name="Sakurai T."/>
            <person name="Satou M."/>
            <person name="Tamse R."/>
            <person name="Vaysberg M."/>
            <person name="Wallender E.K."/>
            <person name="Wong C."/>
            <person name="Yamamura Y."/>
            <person name="Yuan S."/>
            <person name="Shinozaki K."/>
            <person name="Davis R.W."/>
            <person name="Theologis A."/>
            <person name="Ecker J.R."/>
        </authorList>
    </citation>
    <scope>NUCLEOTIDE SEQUENCE [LARGE SCALE MRNA] (ISOFORM 1)</scope>
    <source>
        <strain>cv. Columbia</strain>
    </source>
</reference>
<reference key="4">
    <citation type="journal article" date="2004" name="Prog. Lipid Res.">
        <title>GDSL family of serine esterases/lipases.</title>
        <authorList>
            <person name="Akoh C.C."/>
            <person name="Lee G.-C."/>
            <person name="Liaw Y.-C."/>
            <person name="Huang T.-H."/>
            <person name="Shaw J.-F."/>
        </authorList>
    </citation>
    <scope>REVIEW</scope>
</reference>
<reference key="5">
    <citation type="journal article" date="2008" name="Pak. J. Biol. Sci.">
        <title>Sequence analysis of GDSL lipase gene family in Arabidopsis thaliana.</title>
        <authorList>
            <person name="Ling H."/>
        </authorList>
    </citation>
    <scope>GENE FAMILY</scope>
</reference>
<protein>
    <recommendedName>
        <fullName>GDSL esterase/lipase At1g28580</fullName>
        <ecNumber>3.1.1.-</ecNumber>
    </recommendedName>
    <alternativeName>
        <fullName>Extracellular lipase At1g28580</fullName>
    </alternativeName>
</protein>
<organism>
    <name type="scientific">Arabidopsis thaliana</name>
    <name type="common">Mouse-ear cress</name>
    <dbReference type="NCBI Taxonomy" id="3702"/>
    <lineage>
        <taxon>Eukaryota</taxon>
        <taxon>Viridiplantae</taxon>
        <taxon>Streptophyta</taxon>
        <taxon>Embryophyta</taxon>
        <taxon>Tracheophyta</taxon>
        <taxon>Spermatophyta</taxon>
        <taxon>Magnoliopsida</taxon>
        <taxon>eudicotyledons</taxon>
        <taxon>Gunneridae</taxon>
        <taxon>Pentapetalae</taxon>
        <taxon>rosids</taxon>
        <taxon>malvids</taxon>
        <taxon>Brassicales</taxon>
        <taxon>Brassicaceae</taxon>
        <taxon>Camelineae</taxon>
        <taxon>Arabidopsis</taxon>
    </lineage>
</organism>
<gene>
    <name type="ordered locus">At1g28580</name>
    <name type="ORF">F1K23.18</name>
</gene>
<evidence type="ECO:0000250" key="1"/>
<evidence type="ECO:0000255" key="2"/>
<evidence type="ECO:0000305" key="3"/>
<dbReference type="EC" id="3.1.1.-"/>
<dbReference type="EMBL" id="AC007508">
    <property type="protein sequence ID" value="AAG22836.1"/>
    <property type="molecule type" value="Genomic_DNA"/>
</dbReference>
<dbReference type="EMBL" id="CP002684">
    <property type="protein sequence ID" value="AEE30996.1"/>
    <property type="molecule type" value="Genomic_DNA"/>
</dbReference>
<dbReference type="EMBL" id="CP002684">
    <property type="protein sequence ID" value="AEE30997.1"/>
    <property type="molecule type" value="Genomic_DNA"/>
</dbReference>
<dbReference type="EMBL" id="AF361608">
    <property type="protein sequence ID" value="AAK32776.1"/>
    <property type="molecule type" value="mRNA"/>
</dbReference>
<dbReference type="EMBL" id="AY045814">
    <property type="protein sequence ID" value="AAK76488.1"/>
    <property type="molecule type" value="mRNA"/>
</dbReference>
<dbReference type="EMBL" id="AY074841">
    <property type="protein sequence ID" value="AAL69539.1"/>
    <property type="molecule type" value="mRNA"/>
</dbReference>
<dbReference type="EMBL" id="AY079395">
    <property type="protein sequence ID" value="AAL85126.1"/>
    <property type="molecule type" value="mRNA"/>
</dbReference>
<dbReference type="PIR" id="E86411">
    <property type="entry name" value="E86411"/>
</dbReference>
<dbReference type="RefSeq" id="NP_174180.1">
    <molecule id="Q9FXJ2-1"/>
    <property type="nucleotide sequence ID" value="NM_102626.4"/>
</dbReference>
<dbReference type="RefSeq" id="NP_973931.1">
    <molecule id="Q9FXJ2-2"/>
    <property type="nucleotide sequence ID" value="NM_202202.2"/>
</dbReference>
<dbReference type="SMR" id="Q9FXJ2"/>
<dbReference type="FunCoup" id="Q9FXJ2">
    <property type="interactions" value="143"/>
</dbReference>
<dbReference type="STRING" id="3702.Q9FXJ2"/>
<dbReference type="GlyGen" id="Q9FXJ2">
    <property type="glycosylation" value="2 sites"/>
</dbReference>
<dbReference type="iPTMnet" id="Q9FXJ2"/>
<dbReference type="PaxDb" id="3702-AT1G28580.1"/>
<dbReference type="ProteomicsDB" id="247110">
    <molecule id="Q9FXJ2-1"/>
</dbReference>
<dbReference type="EnsemblPlants" id="AT1G28580.1">
    <molecule id="Q9FXJ2-1"/>
    <property type="protein sequence ID" value="AT1G28580.1"/>
    <property type="gene ID" value="AT1G28580"/>
</dbReference>
<dbReference type="EnsemblPlants" id="AT1G28580.2">
    <molecule id="Q9FXJ2-2"/>
    <property type="protein sequence ID" value="AT1G28580.2"/>
    <property type="gene ID" value="AT1G28580"/>
</dbReference>
<dbReference type="GeneID" id="839758"/>
<dbReference type="Gramene" id="AT1G28580.1">
    <molecule id="Q9FXJ2-1"/>
    <property type="protein sequence ID" value="AT1G28580.1"/>
    <property type="gene ID" value="AT1G28580"/>
</dbReference>
<dbReference type="Gramene" id="AT1G28580.2">
    <molecule id="Q9FXJ2-2"/>
    <property type="protein sequence ID" value="AT1G28580.2"/>
    <property type="gene ID" value="AT1G28580"/>
</dbReference>
<dbReference type="KEGG" id="ath:AT1G28580"/>
<dbReference type="Araport" id="AT1G28580"/>
<dbReference type="TAIR" id="AT1G28580"/>
<dbReference type="eggNOG" id="ENOG502QSMM">
    <property type="taxonomic scope" value="Eukaryota"/>
</dbReference>
<dbReference type="HOGENOM" id="CLU_015101_2_1_1"/>
<dbReference type="InParanoid" id="Q9FXJ2"/>
<dbReference type="OMA" id="CREMIKN"/>
<dbReference type="OrthoDB" id="1600564at2759"/>
<dbReference type="PhylomeDB" id="Q9FXJ2"/>
<dbReference type="BioCyc" id="ARA:AT1G28580-MONOMER"/>
<dbReference type="PRO" id="PR:Q9FXJ2"/>
<dbReference type="Proteomes" id="UP000006548">
    <property type="component" value="Chromosome 1"/>
</dbReference>
<dbReference type="ExpressionAtlas" id="Q9FXJ2">
    <property type="expression patterns" value="baseline and differential"/>
</dbReference>
<dbReference type="GO" id="GO:0005576">
    <property type="term" value="C:extracellular region"/>
    <property type="evidence" value="ECO:0007669"/>
    <property type="project" value="UniProtKB-SubCell"/>
</dbReference>
<dbReference type="GO" id="GO:0000325">
    <property type="term" value="C:plant-type vacuole"/>
    <property type="evidence" value="ECO:0007005"/>
    <property type="project" value="TAIR"/>
</dbReference>
<dbReference type="GO" id="GO:0016788">
    <property type="term" value="F:hydrolase activity, acting on ester bonds"/>
    <property type="evidence" value="ECO:0007669"/>
    <property type="project" value="InterPro"/>
</dbReference>
<dbReference type="GO" id="GO:0016042">
    <property type="term" value="P:lipid catabolic process"/>
    <property type="evidence" value="ECO:0007669"/>
    <property type="project" value="UniProtKB-KW"/>
</dbReference>
<dbReference type="CDD" id="cd01837">
    <property type="entry name" value="SGNH_plant_lipase_like"/>
    <property type="match status" value="1"/>
</dbReference>
<dbReference type="FunFam" id="3.40.50.1110:FF:000024">
    <property type="entry name" value="GDSL esterase/lipase At1g31550"/>
    <property type="match status" value="1"/>
</dbReference>
<dbReference type="Gene3D" id="3.40.50.1110">
    <property type="entry name" value="SGNH hydrolase"/>
    <property type="match status" value="1"/>
</dbReference>
<dbReference type="InterPro" id="IPR001087">
    <property type="entry name" value="GDSL"/>
</dbReference>
<dbReference type="InterPro" id="IPR036514">
    <property type="entry name" value="SGNH_hydro_sf"/>
</dbReference>
<dbReference type="InterPro" id="IPR035669">
    <property type="entry name" value="SGNH_plant_lipase-like"/>
</dbReference>
<dbReference type="PANTHER" id="PTHR22835:SF678">
    <property type="entry name" value="SINAPINE ESTERASE"/>
    <property type="match status" value="1"/>
</dbReference>
<dbReference type="PANTHER" id="PTHR22835">
    <property type="entry name" value="ZINC FINGER FYVE DOMAIN CONTAINING PROTEIN"/>
    <property type="match status" value="1"/>
</dbReference>
<dbReference type="Pfam" id="PF00657">
    <property type="entry name" value="Lipase_GDSL"/>
    <property type="match status" value="1"/>
</dbReference>
<dbReference type="SUPFAM" id="SSF52266">
    <property type="entry name" value="SGNH hydrolase"/>
    <property type="match status" value="1"/>
</dbReference>
<accession>Q9FXJ2</accession>
<accession>Q3ED51</accession>
<feature type="signal peptide" evidence="2">
    <location>
        <begin position="1"/>
        <end position="28"/>
    </location>
</feature>
<feature type="chain" id="PRO_0000367349" description="GDSL esterase/lipase At1g28580">
    <location>
        <begin position="29"/>
        <end position="390"/>
    </location>
</feature>
<feature type="active site" description="Nucleophile" evidence="1">
    <location>
        <position position="44"/>
    </location>
</feature>
<feature type="active site" evidence="1">
    <location>
        <position position="347"/>
    </location>
</feature>
<feature type="active site" evidence="1">
    <location>
        <position position="350"/>
    </location>
</feature>
<feature type="glycosylation site" description="N-linked (GlcNAc...) asparagine" evidence="2">
    <location>
        <position position="140"/>
    </location>
</feature>
<feature type="glycosylation site" description="N-linked (GlcNAc...) asparagine" evidence="2">
    <location>
        <position position="322"/>
    </location>
</feature>
<feature type="splice variant" id="VSP_036687" description="In isoform 2." evidence="3">
    <original>MAYPGSPILMKLLVFIFLSTFVVTNVSSETKCREFKSIISFGDSIADTGNLLGLSDPKDLPHMAFPPYGENFFHHPTGRFSNGRLIIDFI</original>
    <variation>MFFSLVLFT</variation>
    <location>
        <begin position="1"/>
        <end position="90"/>
    </location>
</feature>
<name>GDL7_ARATH</name>
<keyword id="KW-0025">Alternative splicing</keyword>
<keyword id="KW-0325">Glycoprotein</keyword>
<keyword id="KW-0378">Hydrolase</keyword>
<keyword id="KW-0442">Lipid degradation</keyword>
<keyword id="KW-0443">Lipid metabolism</keyword>
<keyword id="KW-1185">Reference proteome</keyword>
<keyword id="KW-0964">Secreted</keyword>
<keyword id="KW-0732">Signal</keyword>
<comment type="subcellular location">
    <subcellularLocation>
        <location evidence="3">Secreted</location>
    </subcellularLocation>
</comment>
<comment type="alternative products">
    <event type="alternative splicing"/>
    <isoform>
        <id>Q9FXJ2-1</id>
        <name>1</name>
        <sequence type="displayed"/>
    </isoform>
    <isoform>
        <id>Q9FXJ2-2</id>
        <name>2</name>
        <sequence type="described" ref="VSP_036687"/>
    </isoform>
</comment>
<comment type="similarity">
    <text evidence="3">Belongs to the 'GDSL' lipolytic enzyme family.</text>
</comment>
<sequence>MAYPGSPILMKLLVFIFLSTFVVTNVSSETKCREFKSIISFGDSIADTGNLLGLSDPKDLPHMAFPPYGENFFHHPTGRFSNGRLIIDFIAEFLGLPLVPPFYGSHNANFEKGVNFAVGGATALERSFLEDRGIHFPYTNVSLGVQLNSFKESLPSICGSPSDCRDMIENALILMGEIGGNDYNYAFFVDKGIEEIKELMPLVITTISSAITELIGMGGRTFLVPGEFPVGCSVLYLTSHQTSNMEEYDPLTGCLKWLNKFGENHGEQLRAELNRLQKLYPHVNIIYADYYNALFHLYQEPAKFGFMNRPLSACCGAGGPYNYTVGRKCGTDIVESCDDPSKYVAWDGVHMTEAAYRLMAEGILNGPYAIPPFDWSCRSSGVKNSGSSDT</sequence>